<dbReference type="EMBL" id="AL939126">
    <property type="protein sequence ID" value="CAA15782.1"/>
    <property type="molecule type" value="Genomic_DNA"/>
</dbReference>
<dbReference type="PIR" id="T35670">
    <property type="entry name" value="T35670"/>
</dbReference>
<dbReference type="RefSeq" id="NP_630119.1">
    <property type="nucleotide sequence ID" value="NC_003888.3"/>
</dbReference>
<dbReference type="SMR" id="O50499"/>
<dbReference type="STRING" id="100226.gene:17763665"/>
<dbReference type="PaxDb" id="100226-SCO6005"/>
<dbReference type="KEGG" id="sco:SCO6005"/>
<dbReference type="PATRIC" id="fig|100226.15.peg.6103"/>
<dbReference type="eggNOG" id="COG1653">
    <property type="taxonomic scope" value="Bacteria"/>
</dbReference>
<dbReference type="HOGENOM" id="CLU_047233_0_0_11"/>
<dbReference type="InParanoid" id="O50499"/>
<dbReference type="OrthoDB" id="8663148at2"/>
<dbReference type="PhylomeDB" id="O50499"/>
<dbReference type="Proteomes" id="UP000001973">
    <property type="component" value="Chromosome"/>
</dbReference>
<dbReference type="GO" id="GO:0005886">
    <property type="term" value="C:plasma membrane"/>
    <property type="evidence" value="ECO:0007669"/>
    <property type="project" value="UniProtKB-SubCell"/>
</dbReference>
<dbReference type="Gene3D" id="3.40.190.10">
    <property type="entry name" value="Periplasmic binding protein-like II"/>
    <property type="match status" value="1"/>
</dbReference>
<dbReference type="InterPro" id="IPR050490">
    <property type="entry name" value="Bact_solute-bd_prot1"/>
</dbReference>
<dbReference type="InterPro" id="IPR022386">
    <property type="entry name" value="Chitin_NgcE"/>
</dbReference>
<dbReference type="InterPro" id="IPR006059">
    <property type="entry name" value="SBP"/>
</dbReference>
<dbReference type="InterPro" id="IPR006311">
    <property type="entry name" value="TAT_signal"/>
</dbReference>
<dbReference type="NCBIfam" id="TIGR03851">
    <property type="entry name" value="chitin_NgcE"/>
    <property type="match status" value="1"/>
</dbReference>
<dbReference type="PANTHER" id="PTHR43649">
    <property type="entry name" value="ARABINOSE-BINDING PROTEIN-RELATED"/>
    <property type="match status" value="1"/>
</dbReference>
<dbReference type="PANTHER" id="PTHR43649:SF31">
    <property type="entry name" value="SN-GLYCEROL-3-PHOSPHATE-BINDING PERIPLASMIC PROTEIN UGPB"/>
    <property type="match status" value="1"/>
</dbReference>
<dbReference type="Pfam" id="PF01547">
    <property type="entry name" value="SBP_bac_1"/>
    <property type="match status" value="1"/>
</dbReference>
<dbReference type="SUPFAM" id="SSF53850">
    <property type="entry name" value="Periplasmic binding protein-like II"/>
    <property type="match status" value="1"/>
</dbReference>
<dbReference type="PROSITE" id="PS51318">
    <property type="entry name" value="TAT"/>
    <property type="match status" value="1"/>
</dbReference>
<sequence length="469" mass="50611">MTIRAGSLDRRTLLRGAIATAAMGSFAVACSSPSSEDKESDSGPKGEKSANNPFGAAANSTVEAAIFDGGYGTDYVDYANQVLGSQVKGLKVQVKPVVDIAPQLQPRFVGGNPPDLIDNSGEDQIGFLGILDQLEELDDLFEASTYEGKKIADIVYPGVKDPGTFKDKFVALNYVMTVYGVWYSKTLFEENGWTPPKTWDEALDLGQEAKKKGKYLFVHGKEAATYYRTLLIDSAIKEGGDEVRLALENLEKGCWSHPAVQGVIKVMETMVKQKMFVPGGSGTQFQKAQAIWSNDQKALLYPSGGWIENEMKKATKADFQMTGIPSMTLTDKPALPYEALRAAAGEPFIVPKQGKNPAGGKEVLRAMLSEKAAANFSKTKLAPTIVKGTVPADGYGSTALVSQTKMLEAAGTNIFNYMFVETYGLNTDQLVPWNSFLAGDLDGKGLTSALQKISDKVREDDSVDKVKVS</sequence>
<evidence type="ECO:0000255" key="1">
    <source>
        <dbReference type="PROSITE-ProRule" id="PRU00648"/>
    </source>
</evidence>
<evidence type="ECO:0000256" key="2">
    <source>
        <dbReference type="SAM" id="MobiDB-lite"/>
    </source>
</evidence>
<evidence type="ECO:0000269" key="3">
    <source>
    </source>
</evidence>
<evidence type="ECO:0000303" key="4">
    <source>
    </source>
</evidence>
<evidence type="ECO:0000305" key="5"/>
<evidence type="ECO:0000305" key="6">
    <source>
    </source>
</evidence>
<evidence type="ECO:0000312" key="7">
    <source>
        <dbReference type="EMBL" id="CAA15782.1"/>
    </source>
</evidence>
<comment type="function">
    <text evidence="3">Part of the ABC transporter complex NgcEFG-MsiK involved in N,N'-diacetylchitobiose ((GlcNAc)2) uptake. Binds (GlcNAc)2. Can also bind GlcNAc.</text>
</comment>
<comment type="subunit">
    <text evidence="6">The complex is composed of two ATP-binding proteins (MsiK), two transmembrane proteins (NgcF and NgcG) and a solute-binding protein (NgcE).</text>
</comment>
<comment type="subcellular location">
    <subcellularLocation>
        <location evidence="5">Cell membrane</location>
    </subcellularLocation>
</comment>
<comment type="induction">
    <text evidence="3">Constitutively expressed. Slightly induced by GlcNAc, (GlcNAc)2 and chitin. Repressed by DasR.</text>
</comment>
<comment type="PTM">
    <text evidence="1">Predicted to be exported by the Tat system. The position of the signal peptide cleavage has not been experimentally proven.</text>
</comment>
<comment type="disruption phenotype">
    <text evidence="3">Disruption of the gene delays (GlcNAc)2 consumption, but does not affect GlcNAc consumption ability. Deletion reduces the level of chitinase activity induced in the presence of (GlcNAc)2.</text>
</comment>
<comment type="similarity">
    <text evidence="5">Belongs to the bacterial solute-binding protein 1 family.</text>
</comment>
<feature type="signal peptide" description="Tat-type signal" evidence="1">
    <location>
        <begin position="1"/>
        <end position="37"/>
    </location>
</feature>
<feature type="chain" id="PRO_5004159544" description="Diacetylchitobiose binding protein NgcE" evidence="1">
    <location>
        <begin position="38"/>
        <end position="469"/>
    </location>
</feature>
<feature type="region of interest" description="Disordered" evidence="2">
    <location>
        <begin position="30"/>
        <end position="54"/>
    </location>
</feature>
<feature type="compositionally biased region" description="Basic and acidic residues" evidence="2">
    <location>
        <begin position="35"/>
        <end position="48"/>
    </location>
</feature>
<reference key="1">
    <citation type="journal article" date="2002" name="Nature">
        <title>Complete genome sequence of the model actinomycete Streptomyces coelicolor A3(2).</title>
        <authorList>
            <person name="Bentley S.D."/>
            <person name="Chater K.F."/>
            <person name="Cerdeno-Tarraga A.-M."/>
            <person name="Challis G.L."/>
            <person name="Thomson N.R."/>
            <person name="James K.D."/>
            <person name="Harris D.E."/>
            <person name="Quail M.A."/>
            <person name="Kieser H."/>
            <person name="Harper D."/>
            <person name="Bateman A."/>
            <person name="Brown S."/>
            <person name="Chandra G."/>
            <person name="Chen C.W."/>
            <person name="Collins M."/>
            <person name="Cronin A."/>
            <person name="Fraser A."/>
            <person name="Goble A."/>
            <person name="Hidalgo J."/>
            <person name="Hornsby T."/>
            <person name="Howarth S."/>
            <person name="Huang C.-H."/>
            <person name="Kieser T."/>
            <person name="Larke L."/>
            <person name="Murphy L.D."/>
            <person name="Oliver K."/>
            <person name="O'Neil S."/>
            <person name="Rabbinowitsch E."/>
            <person name="Rajandream M.A."/>
            <person name="Rutherford K.M."/>
            <person name="Rutter S."/>
            <person name="Seeger K."/>
            <person name="Saunders D."/>
            <person name="Sharp S."/>
            <person name="Squares R."/>
            <person name="Squares S."/>
            <person name="Taylor K."/>
            <person name="Warren T."/>
            <person name="Wietzorrek A."/>
            <person name="Woodward J.R."/>
            <person name="Barrell B.G."/>
            <person name="Parkhill J."/>
            <person name="Hopwood D.A."/>
        </authorList>
    </citation>
    <scope>NUCLEOTIDE SEQUENCE [LARGE SCALE GENOMIC DNA]</scope>
    <source>
        <strain>ATCC BAA-471 / A3(2) / M145</strain>
    </source>
</reference>
<reference key="2">
    <citation type="journal article" date="2018" name="Microbes Environ.">
        <title>NgcESco acts as a lower-affinity binding protein of an ABC transporter for the uptake of N,N'-diacetylchitobiose in Streptomyces coelicolor A3(2).</title>
        <authorList>
            <person name="Iinuma C."/>
            <person name="Saito A."/>
            <person name="Ohnuma T."/>
            <person name="Tenconi E."/>
            <person name="Rosu A."/>
            <person name="Colson S."/>
            <person name="Mizutani Y."/>
            <person name="Liu F."/>
            <person name="Swiatek-Polatynska M."/>
            <person name="van Wezel G.P."/>
            <person name="Rigali S."/>
            <person name="Fujii T."/>
            <person name="Miyashita K."/>
        </authorList>
    </citation>
    <scope>FUNCTION</scope>
    <scope>SUBUNIT</scope>
    <scope>INDUCTION</scope>
    <scope>DISRUPTION PHENOTYPE</scope>
    <source>
        <strain>ATCC BAA-471 / A3(2) / M145</strain>
    </source>
</reference>
<gene>
    <name evidence="4" type="primary">ngcE</name>
    <name evidence="7" type="ordered locus">SCO6005</name>
</gene>
<organism>
    <name type="scientific">Streptomyces coelicolor (strain ATCC BAA-471 / A3(2) / M145)</name>
    <dbReference type="NCBI Taxonomy" id="100226"/>
    <lineage>
        <taxon>Bacteria</taxon>
        <taxon>Bacillati</taxon>
        <taxon>Actinomycetota</taxon>
        <taxon>Actinomycetes</taxon>
        <taxon>Kitasatosporales</taxon>
        <taxon>Streptomycetaceae</taxon>
        <taxon>Streptomyces</taxon>
        <taxon>Streptomyces albidoflavus group</taxon>
    </lineage>
</organism>
<proteinExistence type="evidence at protein level"/>
<keyword id="KW-1003">Cell membrane</keyword>
<keyword id="KW-0472">Membrane</keyword>
<keyword id="KW-1185">Reference proteome</keyword>
<keyword id="KW-0732">Signal</keyword>
<keyword id="KW-0762">Sugar transport</keyword>
<keyword id="KW-0813">Transport</keyword>
<name>NGCE_STRCO</name>
<accession>O50499</accession>
<protein>
    <recommendedName>
        <fullName evidence="5">Diacetylchitobiose binding protein NgcE</fullName>
    </recommendedName>
</protein>